<reference key="1">
    <citation type="journal article" date="1996" name="Science">
        <title>Complete genome sequence of the methanogenic archaeon, Methanococcus jannaschii.</title>
        <authorList>
            <person name="Bult C.J."/>
            <person name="White O."/>
            <person name="Olsen G.J."/>
            <person name="Zhou L."/>
            <person name="Fleischmann R.D."/>
            <person name="Sutton G.G."/>
            <person name="Blake J.A."/>
            <person name="FitzGerald L.M."/>
            <person name="Clayton R.A."/>
            <person name="Gocayne J.D."/>
            <person name="Kerlavage A.R."/>
            <person name="Dougherty B.A."/>
            <person name="Tomb J.-F."/>
            <person name="Adams M.D."/>
            <person name="Reich C.I."/>
            <person name="Overbeek R."/>
            <person name="Kirkness E.F."/>
            <person name="Weinstock K.G."/>
            <person name="Merrick J.M."/>
            <person name="Glodek A."/>
            <person name="Scott J.L."/>
            <person name="Geoghagen N.S.M."/>
            <person name="Weidman J.F."/>
            <person name="Fuhrmann J.L."/>
            <person name="Nguyen D."/>
            <person name="Utterback T.R."/>
            <person name="Kelley J.M."/>
            <person name="Peterson J.D."/>
            <person name="Sadow P.W."/>
            <person name="Hanna M.C."/>
            <person name="Cotton M.D."/>
            <person name="Roberts K.M."/>
            <person name="Hurst M.A."/>
            <person name="Kaine B.P."/>
            <person name="Borodovsky M."/>
            <person name="Klenk H.-P."/>
            <person name="Fraser C.M."/>
            <person name="Smith H.O."/>
            <person name="Woese C.R."/>
            <person name="Venter J.C."/>
        </authorList>
    </citation>
    <scope>NUCLEOTIDE SEQUENCE [LARGE SCALE GENOMIC DNA]</scope>
    <source>
        <strain>ATCC 43067 / DSM 2661 / JAL-1 / JCM 10045 / NBRC 100440</strain>
    </source>
</reference>
<organism>
    <name type="scientific">Methanocaldococcus jannaschii (strain ATCC 43067 / DSM 2661 / JAL-1 / JCM 10045 / NBRC 100440)</name>
    <name type="common">Methanococcus jannaschii</name>
    <dbReference type="NCBI Taxonomy" id="243232"/>
    <lineage>
        <taxon>Archaea</taxon>
        <taxon>Methanobacteriati</taxon>
        <taxon>Methanobacteriota</taxon>
        <taxon>Methanomada group</taxon>
        <taxon>Methanococci</taxon>
        <taxon>Methanococcales</taxon>
        <taxon>Methanocaldococcaceae</taxon>
        <taxon>Methanocaldococcus</taxon>
    </lineage>
</organism>
<gene>
    <name type="ordered locus">MJ1248</name>
</gene>
<feature type="chain" id="PRO_0000107239" description="Uncharacterized protein MJ1248">
    <location>
        <begin position="1"/>
        <end position="154"/>
    </location>
</feature>
<proteinExistence type="predicted"/>
<accession>Q58645</accession>
<keyword id="KW-1185">Reference proteome</keyword>
<dbReference type="EMBL" id="L77117">
    <property type="protein sequence ID" value="AAB99258.1"/>
    <property type="molecule type" value="Genomic_DNA"/>
</dbReference>
<dbReference type="PIR" id="G64455">
    <property type="entry name" value="G64455"/>
</dbReference>
<dbReference type="SMR" id="Q58645"/>
<dbReference type="STRING" id="243232.MJ_1248"/>
<dbReference type="PaxDb" id="243232-MJ_1248"/>
<dbReference type="EnsemblBacteria" id="AAB99258">
    <property type="protein sequence ID" value="AAB99258"/>
    <property type="gene ID" value="MJ_1248"/>
</dbReference>
<dbReference type="KEGG" id="mja:MJ_1248"/>
<dbReference type="eggNOG" id="arCOG09678">
    <property type="taxonomic scope" value="Archaea"/>
</dbReference>
<dbReference type="HOGENOM" id="CLU_1727275_0_0_2"/>
<dbReference type="InParanoid" id="Q58645"/>
<dbReference type="OrthoDB" id="65211at2157"/>
<dbReference type="Proteomes" id="UP000000805">
    <property type="component" value="Chromosome"/>
</dbReference>
<sequence>MKMEVIEKLSELSGIDKKSLRRILIILEFSLRKKDGSPTSFAEKFNIKSFGDLYNYIRDVKSNLKRDHEIEGFNGLTEMWKSVAPRAQYWIMDTFGEENPRDALFSASVFTMRTFGIMLDNLLLLKKIIKTLDEYQKEVTEYVSAQKFEAEDLE</sequence>
<protein>
    <recommendedName>
        <fullName>Uncharacterized protein MJ1248</fullName>
    </recommendedName>
</protein>
<name>Y1248_METJA</name>